<protein>
    <recommendedName>
        <fullName evidence="3">Transcription factor ATEG_07666</fullName>
    </recommendedName>
    <alternativeName>
        <fullName evidence="3">Azasperpyranone A biosynthesis cluster B protein ATEG_07666</fullName>
    </alternativeName>
</protein>
<name>AZPB6_ASPTN</name>
<sequence>MSCPAARKGRQQPGFACEECRRRKARCDRVRPKCGFCTENGMQCVIVEKRQQRGPIKGQLNSMQSQLELPAGIPPVLDDFDIQASGLSEHDMSLVAATSVGTSTEASLILPAALDKLELPASSEAAAAGLPGWPEWLDWQDMNNSSLILPELTASTLTDPLSLDSLNGSPPTMVDSSSKIQMTDLIRAELDQLYFDRVHAFCPIIHRRRYFASLAQDNHTTAQLCLQSAMRALAAAMSANSSHLSEQFYSEARSLLDTHSQTPATPRDKIPLEHIQAWLLLSHYELLRIGVHQAMLTAGRAFRLVQMARLCEIDAPGGDLQLSPVASSSSSISTNTDSSESFVDAEEGRRTFWKKWHVFLHADTMQNSLTRLLPIQVSTRLPAPEANFQNNQPTRTSFLADAMAQTGPSTLSPFAECIIMATLHGRCMTHRRLYATEFEAGTRDFCIRQGWLATAVERRVQMLVPSPAVDSDPMLLFTHMLAYRATVHLSITVQQASWRTVDQQVLAAAYQQRAAQAASEIVRLAKAVPYLSPFKTHPFLPDTLACAATFLSTQTATDGGGDDIQHLLRVLGELQDTHSLARDYLQTLKLQVQGNRQDGWY</sequence>
<keyword id="KW-0238">DNA-binding</keyword>
<keyword id="KW-0479">Metal-binding</keyword>
<keyword id="KW-0539">Nucleus</keyword>
<keyword id="KW-1185">Reference proteome</keyword>
<keyword id="KW-0804">Transcription</keyword>
<keyword id="KW-0805">Transcription regulation</keyword>
<keyword id="KW-0862">Zinc</keyword>
<gene>
    <name type="ORF">ATEG_07666</name>
</gene>
<organism>
    <name type="scientific">Aspergillus terreus (strain NIH 2624 / FGSC A1156)</name>
    <dbReference type="NCBI Taxonomy" id="341663"/>
    <lineage>
        <taxon>Eukaryota</taxon>
        <taxon>Fungi</taxon>
        <taxon>Dikarya</taxon>
        <taxon>Ascomycota</taxon>
        <taxon>Pezizomycotina</taxon>
        <taxon>Eurotiomycetes</taxon>
        <taxon>Eurotiomycetidae</taxon>
        <taxon>Eurotiales</taxon>
        <taxon>Aspergillaceae</taxon>
        <taxon>Aspergillus</taxon>
        <taxon>Aspergillus subgen. Circumdati</taxon>
    </lineage>
</organism>
<feature type="chain" id="PRO_0000450092" description="Transcription factor ATEG_07666">
    <location>
        <begin position="1"/>
        <end position="601"/>
    </location>
</feature>
<feature type="DNA-binding region" description="Zn(2)-C6 fungal-type" evidence="1">
    <location>
        <begin position="17"/>
        <end position="44"/>
    </location>
</feature>
<dbReference type="EMBL" id="CH476604">
    <property type="protein sequence ID" value="EAU31928.1"/>
    <property type="status" value="ALT_SEQ"/>
    <property type="molecule type" value="Genomic_DNA"/>
</dbReference>
<dbReference type="RefSeq" id="XP_001216287.1">
    <property type="nucleotide sequence ID" value="XM_001216287.1"/>
</dbReference>
<dbReference type="STRING" id="341663.Q0CF68"/>
<dbReference type="EnsemblFungi" id="EAU31928">
    <property type="protein sequence ID" value="EAU31928"/>
    <property type="gene ID" value="ATEG_07666"/>
</dbReference>
<dbReference type="GeneID" id="4322611"/>
<dbReference type="eggNOG" id="ENOG502RZ01">
    <property type="taxonomic scope" value="Eukaryota"/>
</dbReference>
<dbReference type="HOGENOM" id="CLU_011017_3_1_1"/>
<dbReference type="OrthoDB" id="3037908at2759"/>
<dbReference type="Proteomes" id="UP000007963">
    <property type="component" value="Unassembled WGS sequence"/>
</dbReference>
<dbReference type="GO" id="GO:0005634">
    <property type="term" value="C:nucleus"/>
    <property type="evidence" value="ECO:0007669"/>
    <property type="project" value="UniProtKB-SubCell"/>
</dbReference>
<dbReference type="GO" id="GO:0003677">
    <property type="term" value="F:DNA binding"/>
    <property type="evidence" value="ECO:0007669"/>
    <property type="project" value="UniProtKB-KW"/>
</dbReference>
<dbReference type="GO" id="GO:0000981">
    <property type="term" value="F:DNA-binding transcription factor activity, RNA polymerase II-specific"/>
    <property type="evidence" value="ECO:0007669"/>
    <property type="project" value="InterPro"/>
</dbReference>
<dbReference type="GO" id="GO:0008270">
    <property type="term" value="F:zinc ion binding"/>
    <property type="evidence" value="ECO:0007669"/>
    <property type="project" value="InterPro"/>
</dbReference>
<dbReference type="GO" id="GO:0006351">
    <property type="term" value="P:DNA-templated transcription"/>
    <property type="evidence" value="ECO:0007669"/>
    <property type="project" value="InterPro"/>
</dbReference>
<dbReference type="GO" id="GO:0009893">
    <property type="term" value="P:positive regulation of metabolic process"/>
    <property type="evidence" value="ECO:0007669"/>
    <property type="project" value="UniProtKB-ARBA"/>
</dbReference>
<dbReference type="CDD" id="cd12148">
    <property type="entry name" value="fungal_TF_MHR"/>
    <property type="match status" value="1"/>
</dbReference>
<dbReference type="CDD" id="cd00067">
    <property type="entry name" value="GAL4"/>
    <property type="match status" value="1"/>
</dbReference>
<dbReference type="Gene3D" id="4.10.240.10">
    <property type="entry name" value="Zn(2)-C6 fungal-type DNA-binding domain"/>
    <property type="match status" value="1"/>
</dbReference>
<dbReference type="InterPro" id="IPR050815">
    <property type="entry name" value="TF_fung"/>
</dbReference>
<dbReference type="InterPro" id="IPR007219">
    <property type="entry name" value="Transcription_factor_dom_fun"/>
</dbReference>
<dbReference type="InterPro" id="IPR036864">
    <property type="entry name" value="Zn2-C6_fun-type_DNA-bd_sf"/>
</dbReference>
<dbReference type="InterPro" id="IPR001138">
    <property type="entry name" value="Zn2Cys6_DnaBD"/>
</dbReference>
<dbReference type="PANTHER" id="PTHR47338:SF3">
    <property type="entry name" value="C6 FINGER DOMAIN TRANSCRIPTION FACTOR DBAA-RELATED"/>
    <property type="match status" value="1"/>
</dbReference>
<dbReference type="PANTHER" id="PTHR47338">
    <property type="entry name" value="ZN(II)2CYS6 TRANSCRIPTION FACTOR (EUROFUNG)-RELATED"/>
    <property type="match status" value="1"/>
</dbReference>
<dbReference type="Pfam" id="PF04082">
    <property type="entry name" value="Fungal_trans"/>
    <property type="match status" value="1"/>
</dbReference>
<dbReference type="Pfam" id="PF00172">
    <property type="entry name" value="Zn_clus"/>
    <property type="match status" value="1"/>
</dbReference>
<dbReference type="SMART" id="SM00066">
    <property type="entry name" value="GAL4"/>
    <property type="match status" value="1"/>
</dbReference>
<dbReference type="SUPFAM" id="SSF57701">
    <property type="entry name" value="Zn2/Cys6 DNA-binding domain"/>
    <property type="match status" value="1"/>
</dbReference>
<dbReference type="PROSITE" id="PS00463">
    <property type="entry name" value="ZN2_CY6_FUNGAL_1"/>
    <property type="match status" value="1"/>
</dbReference>
<dbReference type="PROSITE" id="PS50048">
    <property type="entry name" value="ZN2_CY6_FUNGAL_2"/>
    <property type="match status" value="1"/>
</dbReference>
<accession>Q0CF68</accession>
<evidence type="ECO:0000255" key="1">
    <source>
        <dbReference type="PROSITE-ProRule" id="PRU00227"/>
    </source>
</evidence>
<evidence type="ECO:0000269" key="2">
    <source>
    </source>
</evidence>
<evidence type="ECO:0000303" key="3">
    <source>
    </source>
</evidence>
<evidence type="ECO:0000305" key="4"/>
<proteinExistence type="evidence at protein level"/>
<comment type="function">
    <text evidence="2">Specific transcriptional regulator for the azasperpyranone A biosynthesis cluster B.</text>
</comment>
<comment type="subcellular location">
    <subcellularLocation>
        <location evidence="1">Nucleus</location>
    </subcellularLocation>
</comment>
<comment type="induction">
    <text evidence="2">Expression is induced by the azasperpyranone transcriptional regulator ATEG_07667.</text>
</comment>
<comment type="disruption phenotype">
    <text evidence="2">Results in the significant down-regulation of cluster B, whereas it exerts no influence on cluster A.</text>
</comment>
<comment type="biotechnology">
    <text evidence="2">Azasperpyranones display potential anti-cancer activities (PubMed:31908094). Azasperpyranones A, C, D, and F exhibit potent growth-inhibitory activity against the A549, HepG2, HCT-116, and HL-60 cell lines, with IC(50) values of 2.39-14.42 mm, respectively (PubMed:31908094). Moreover, azasperpyranone D significantly inhibits HCT-116 xenograft tumor growth in BALB/c-nu mice (PubMed:31908094). In addition, azasperpyranones A and C can bind with four kinds of therapeutic targets for cancer, eEF2K, FGFR, survivin, and TNF-a (PubMed:31908094).</text>
</comment>
<comment type="sequence caution" evidence="4">
    <conflict type="erroneous gene model prediction">
        <sequence resource="EMBL-CDS" id="EAU31928"/>
    </conflict>
</comment>
<reference key="1">
    <citation type="submission" date="2005-09" db="EMBL/GenBank/DDBJ databases">
        <title>Annotation of the Aspergillus terreus NIH2624 genome.</title>
        <authorList>
            <person name="Birren B.W."/>
            <person name="Lander E.S."/>
            <person name="Galagan J.E."/>
            <person name="Nusbaum C."/>
            <person name="Devon K."/>
            <person name="Henn M."/>
            <person name="Ma L.-J."/>
            <person name="Jaffe D.B."/>
            <person name="Butler J."/>
            <person name="Alvarez P."/>
            <person name="Gnerre S."/>
            <person name="Grabherr M."/>
            <person name="Kleber M."/>
            <person name="Mauceli E.W."/>
            <person name="Brockman W."/>
            <person name="Rounsley S."/>
            <person name="Young S.K."/>
            <person name="LaButti K."/>
            <person name="Pushparaj V."/>
            <person name="DeCaprio D."/>
            <person name="Crawford M."/>
            <person name="Koehrsen M."/>
            <person name="Engels R."/>
            <person name="Montgomery P."/>
            <person name="Pearson M."/>
            <person name="Howarth C."/>
            <person name="Larson L."/>
            <person name="Luoma S."/>
            <person name="White J."/>
            <person name="Alvarado L."/>
            <person name="Kodira C.D."/>
            <person name="Zeng Q."/>
            <person name="Oleary S."/>
            <person name="Yandava C."/>
            <person name="Denning D.W."/>
            <person name="Nierman W.C."/>
            <person name="Milne T."/>
            <person name="Madden K."/>
        </authorList>
    </citation>
    <scope>NUCLEOTIDE SEQUENCE [LARGE SCALE GENOMIC DNA]</scope>
    <source>
        <strain>NIH 2624 / FGSC A1156</strain>
    </source>
</reference>
<reference key="2">
    <citation type="journal article" date="2020" name="Angew. Chem. Int. Ed.">
        <title>Collaborative biosynthesis of a class of bioactive azaphilones by two separate gene clusters containing four PKS/NRPSs with transcriptional cosstalk in fungi.</title>
        <authorList>
            <person name="Huang X."/>
            <person name="Zhang W."/>
            <person name="Tang S."/>
            <person name="Wei S."/>
            <person name="Lu X."/>
        </authorList>
    </citation>
    <scope>FUNCTION</scope>
    <scope>DISRUPTION PHENOTYPE</scope>
    <scope>BIOTECHNOLOGY</scope>
</reference>